<comment type="function">
    <text evidence="5">Catalyzes the formation of S-adenosylmethionine from methionine and ATP. The reaction comprises two steps that are both catalyzed by the same enzyme: formation of S-adenosylmethionine (AdoMet) and triphosphate, and subsequent hydrolysis of the triphosphate.</text>
</comment>
<comment type="catalytic activity">
    <reaction evidence="5">
        <text>L-methionine + ATP + H2O = S-adenosyl-L-methionine + phosphate + diphosphate</text>
        <dbReference type="Rhea" id="RHEA:21080"/>
        <dbReference type="ChEBI" id="CHEBI:15377"/>
        <dbReference type="ChEBI" id="CHEBI:30616"/>
        <dbReference type="ChEBI" id="CHEBI:33019"/>
        <dbReference type="ChEBI" id="CHEBI:43474"/>
        <dbReference type="ChEBI" id="CHEBI:57844"/>
        <dbReference type="ChEBI" id="CHEBI:59789"/>
        <dbReference type="EC" id="2.5.1.6"/>
    </reaction>
</comment>
<comment type="cofactor">
    <cofactor evidence="5">
        <name>Mn(2+)</name>
        <dbReference type="ChEBI" id="CHEBI:29035"/>
    </cofactor>
    <cofactor evidence="5">
        <name>Mg(2+)</name>
        <dbReference type="ChEBI" id="CHEBI:18420"/>
    </cofactor>
    <cofactor evidence="5">
        <name>Co(2+)</name>
        <dbReference type="ChEBI" id="CHEBI:48828"/>
    </cofactor>
    <text evidence="3 5">Binds 2 divalent ions per subunit. The metal ions interact primarily with the substrate (By similarity). Can utilize magnesium, manganese or cobalt (in vitro) (By similarity).</text>
</comment>
<comment type="cofactor">
    <cofactor evidence="5">
        <name>K(+)</name>
        <dbReference type="ChEBI" id="CHEBI:29103"/>
    </cofactor>
    <text evidence="3">Binds 1 potassium ion per subunit. The potassium ion interacts primarily with the substrate (By similarity).</text>
</comment>
<comment type="pathway">
    <text evidence="5">Amino-acid biosynthesis; S-adenosyl-L-methionine biosynthesis; S-adenosyl-L-methionine from L-methionine: step 1/1.</text>
</comment>
<comment type="subunit">
    <text evidence="1">Homotetramer.</text>
</comment>
<comment type="subcellular location">
    <subcellularLocation>
        <location evidence="1">Cytoplasm</location>
    </subcellularLocation>
</comment>
<comment type="similarity">
    <text evidence="6">Belongs to the AdoMet synthase family.</text>
</comment>
<sequence>MDTFLFTSESVNEGHPDKLCDQISDAVLDACLEQDPDSKVACETCTKTNLVMIFGEITTKANLDYEKIVRDTCRAVGFVSEDVGLDADNCKVLVNIEQQSPDIAQGVHGHLTKRPEEIGAGDQGHMFGYATDETPELMPLSHVLATKLGARLTEVRKNGTCPWLRPDGKTQVTVEYFNDHGAMVPIRVHTVLISTQHDETVTNDEIAADLKEHVIKPIVPEKFLDEKTIFHLNPSGRFVIGGPHGDAGLTGRKIIIDTYGGWGAHGGGAFSGKDPTKVDRSGAYIVRQAAKSIVASGLARRCIVQVSYAIGVPEPLSVFVDTYATGKIPDKEILKIVKESFDFRPGMIAINLDLKRGGNGRFLKTAAYGHFGRDDPDFTWEVVKPLKAEKAQE</sequence>
<gene>
    <name type="primary">METK4</name>
    <name type="ORF">GSVIVT00022531001</name>
    <name type="ORF">LOC100251171</name>
</gene>
<organism>
    <name type="scientific">Vitis vinifera</name>
    <name type="common">Grape</name>
    <dbReference type="NCBI Taxonomy" id="29760"/>
    <lineage>
        <taxon>Eukaryota</taxon>
        <taxon>Viridiplantae</taxon>
        <taxon>Streptophyta</taxon>
        <taxon>Embryophyta</taxon>
        <taxon>Tracheophyta</taxon>
        <taxon>Spermatophyta</taxon>
        <taxon>Magnoliopsida</taxon>
        <taxon>eudicotyledons</taxon>
        <taxon>Gunneridae</taxon>
        <taxon>Pentapetalae</taxon>
        <taxon>rosids</taxon>
        <taxon>Vitales</taxon>
        <taxon>Vitaceae</taxon>
        <taxon>Viteae</taxon>
        <taxon>Vitis</taxon>
    </lineage>
</organism>
<feature type="chain" id="PRO_0000363057" description="S-adenosylmethionine synthase 4">
    <location>
        <begin position="1"/>
        <end position="393"/>
    </location>
</feature>
<feature type="binding site" evidence="3">
    <location>
        <position position="9"/>
    </location>
    <ligand>
        <name>Mg(2+)</name>
        <dbReference type="ChEBI" id="CHEBI:18420"/>
    </ligand>
</feature>
<feature type="binding site" description="in other chain" evidence="4">
    <location>
        <position position="15"/>
    </location>
    <ligand>
        <name>ATP</name>
        <dbReference type="ChEBI" id="CHEBI:30616"/>
        <note>ligand shared between two neighboring subunits</note>
    </ligand>
</feature>
<feature type="binding site" evidence="2">
    <location>
        <position position="43"/>
    </location>
    <ligand>
        <name>K(+)</name>
        <dbReference type="ChEBI" id="CHEBI:29103"/>
    </ligand>
</feature>
<feature type="binding site" description="in other chain" evidence="2">
    <location>
        <position position="56"/>
    </location>
    <ligand>
        <name>L-methionine</name>
        <dbReference type="ChEBI" id="CHEBI:57844"/>
        <note>ligand shared between two neighboring subunits</note>
    </ligand>
</feature>
<feature type="binding site" description="in other chain" evidence="2">
    <location>
        <position position="99"/>
    </location>
    <ligand>
        <name>L-methionine</name>
        <dbReference type="ChEBI" id="CHEBI:57844"/>
        <note>ligand shared between two neighboring subunits</note>
    </ligand>
</feature>
<feature type="binding site" description="in other chain" evidence="4">
    <location>
        <begin position="167"/>
        <end position="169"/>
    </location>
    <ligand>
        <name>ATP</name>
        <dbReference type="ChEBI" id="CHEBI:30616"/>
        <note>ligand shared between two neighboring subunits</note>
    </ligand>
</feature>
<feature type="binding site" description="in other chain" evidence="4">
    <location>
        <begin position="235"/>
        <end position="238"/>
    </location>
    <ligand>
        <name>ATP</name>
        <dbReference type="ChEBI" id="CHEBI:30616"/>
        <note>ligand shared between two neighboring subunits</note>
    </ligand>
</feature>
<feature type="binding site" description="in other chain" evidence="4">
    <location>
        <position position="246"/>
    </location>
    <ligand>
        <name>ATP</name>
        <dbReference type="ChEBI" id="CHEBI:30616"/>
        <note>ligand shared between two neighboring subunits</note>
    </ligand>
</feature>
<feature type="binding site" evidence="2">
    <location>
        <position position="246"/>
    </location>
    <ligand>
        <name>L-methionine</name>
        <dbReference type="ChEBI" id="CHEBI:57844"/>
        <note>ligand shared between two neighboring subunits</note>
    </ligand>
</feature>
<feature type="binding site" description="in other chain" evidence="2">
    <location>
        <begin position="252"/>
        <end position="253"/>
    </location>
    <ligand>
        <name>ATP</name>
        <dbReference type="ChEBI" id="CHEBI:30616"/>
        <note>ligand shared between two neighboring subunits</note>
    </ligand>
</feature>
<feature type="binding site" evidence="2">
    <location>
        <position position="269"/>
    </location>
    <ligand>
        <name>ATP</name>
        <dbReference type="ChEBI" id="CHEBI:30616"/>
        <note>ligand shared between two neighboring subunits</note>
    </ligand>
</feature>
<feature type="binding site" evidence="2">
    <location>
        <position position="273"/>
    </location>
    <ligand>
        <name>ATP</name>
        <dbReference type="ChEBI" id="CHEBI:30616"/>
        <note>ligand shared between two neighboring subunits</note>
    </ligand>
</feature>
<feature type="binding site" evidence="3">
    <location>
        <position position="277"/>
    </location>
    <ligand>
        <name>ATP</name>
        <dbReference type="ChEBI" id="CHEBI:30616"/>
        <note>ligand shared between two neighboring subunits</note>
    </ligand>
</feature>
<feature type="binding site" description="in other chain" evidence="2">
    <location>
        <position position="277"/>
    </location>
    <ligand>
        <name>L-methionine</name>
        <dbReference type="ChEBI" id="CHEBI:57844"/>
        <note>ligand shared between two neighboring subunits</note>
    </ligand>
</feature>
<protein>
    <recommendedName>
        <fullName>S-adenosylmethionine synthase 4</fullName>
        <shortName>AdoMet synthase 4</shortName>
        <ecNumber evidence="5">2.5.1.6</ecNumber>
    </recommendedName>
    <alternativeName>
        <fullName>Methionine adenosyltransferase 4</fullName>
        <shortName>MAT 4</shortName>
    </alternativeName>
</protein>
<name>METK4_VITVI</name>
<proteinExistence type="inferred from homology"/>
<dbReference type="EC" id="2.5.1.6" evidence="5"/>
<dbReference type="RefSeq" id="NP_001384672.1">
    <property type="nucleotide sequence ID" value="NM_001397743.1"/>
</dbReference>
<dbReference type="RefSeq" id="XP_010659744.1">
    <property type="nucleotide sequence ID" value="XM_010661442.2"/>
</dbReference>
<dbReference type="SMR" id="A7PRJ6"/>
<dbReference type="PaxDb" id="29760-VIT_14s0060g00480.t01"/>
<dbReference type="EnsemblPlants" id="Vitvi14g02444_t001">
    <property type="protein sequence ID" value="Vitvi14g02444_P001"/>
    <property type="gene ID" value="Vitvi14g02444"/>
</dbReference>
<dbReference type="GeneID" id="100251171"/>
<dbReference type="Gramene" id="Vitvi14g02444_t001">
    <property type="protein sequence ID" value="Vitvi14g02444_P001"/>
    <property type="gene ID" value="Vitvi14g02444"/>
</dbReference>
<dbReference type="eggNOG" id="KOG1506">
    <property type="taxonomic scope" value="Eukaryota"/>
</dbReference>
<dbReference type="OrthoDB" id="5852090at2759"/>
<dbReference type="UniPathway" id="UPA00315">
    <property type="reaction ID" value="UER00080"/>
</dbReference>
<dbReference type="ExpressionAtlas" id="A7PRJ6">
    <property type="expression patterns" value="baseline and differential"/>
</dbReference>
<dbReference type="GO" id="GO:0005737">
    <property type="term" value="C:cytoplasm"/>
    <property type="evidence" value="ECO:0007669"/>
    <property type="project" value="UniProtKB-SubCell"/>
</dbReference>
<dbReference type="GO" id="GO:0005524">
    <property type="term" value="F:ATP binding"/>
    <property type="evidence" value="ECO:0007669"/>
    <property type="project" value="UniProtKB-KW"/>
</dbReference>
<dbReference type="GO" id="GO:0046872">
    <property type="term" value="F:metal ion binding"/>
    <property type="evidence" value="ECO:0007669"/>
    <property type="project" value="UniProtKB-KW"/>
</dbReference>
<dbReference type="GO" id="GO:0004478">
    <property type="term" value="F:methionine adenosyltransferase activity"/>
    <property type="evidence" value="ECO:0007669"/>
    <property type="project" value="UniProtKB-EC"/>
</dbReference>
<dbReference type="GO" id="GO:0006730">
    <property type="term" value="P:one-carbon metabolic process"/>
    <property type="evidence" value="ECO:0007669"/>
    <property type="project" value="UniProtKB-KW"/>
</dbReference>
<dbReference type="GO" id="GO:0006556">
    <property type="term" value="P:S-adenosylmethionine biosynthetic process"/>
    <property type="evidence" value="ECO:0007669"/>
    <property type="project" value="UniProtKB-UniPathway"/>
</dbReference>
<dbReference type="CDD" id="cd18079">
    <property type="entry name" value="S-AdoMet_synt"/>
    <property type="match status" value="1"/>
</dbReference>
<dbReference type="FunFam" id="3.30.300.10:FF:000001">
    <property type="entry name" value="S-adenosylmethionine synthase"/>
    <property type="match status" value="1"/>
</dbReference>
<dbReference type="FunFam" id="3.30.300.10:FF:000003">
    <property type="entry name" value="S-adenosylmethionine synthase"/>
    <property type="match status" value="1"/>
</dbReference>
<dbReference type="FunFam" id="3.30.300.10:FF:000004">
    <property type="entry name" value="S-adenosylmethionine synthase"/>
    <property type="match status" value="1"/>
</dbReference>
<dbReference type="Gene3D" id="3.30.300.10">
    <property type="match status" value="3"/>
</dbReference>
<dbReference type="HAMAP" id="MF_00086">
    <property type="entry name" value="S_AdoMet_synth1"/>
    <property type="match status" value="1"/>
</dbReference>
<dbReference type="InterPro" id="IPR022631">
    <property type="entry name" value="ADOMET_SYNTHASE_CS"/>
</dbReference>
<dbReference type="InterPro" id="IPR022630">
    <property type="entry name" value="S-AdoMet_synt_C"/>
</dbReference>
<dbReference type="InterPro" id="IPR022629">
    <property type="entry name" value="S-AdoMet_synt_central"/>
</dbReference>
<dbReference type="InterPro" id="IPR022628">
    <property type="entry name" value="S-AdoMet_synt_N"/>
</dbReference>
<dbReference type="InterPro" id="IPR002133">
    <property type="entry name" value="S-AdoMet_synthetase"/>
</dbReference>
<dbReference type="InterPro" id="IPR022636">
    <property type="entry name" value="S-AdoMet_synthetase_sfam"/>
</dbReference>
<dbReference type="NCBIfam" id="TIGR01034">
    <property type="entry name" value="metK"/>
    <property type="match status" value="1"/>
</dbReference>
<dbReference type="PANTHER" id="PTHR11964">
    <property type="entry name" value="S-ADENOSYLMETHIONINE SYNTHETASE"/>
    <property type="match status" value="1"/>
</dbReference>
<dbReference type="Pfam" id="PF02773">
    <property type="entry name" value="S-AdoMet_synt_C"/>
    <property type="match status" value="1"/>
</dbReference>
<dbReference type="Pfam" id="PF02772">
    <property type="entry name" value="S-AdoMet_synt_M"/>
    <property type="match status" value="1"/>
</dbReference>
<dbReference type="Pfam" id="PF00438">
    <property type="entry name" value="S-AdoMet_synt_N"/>
    <property type="match status" value="1"/>
</dbReference>
<dbReference type="PIRSF" id="PIRSF000497">
    <property type="entry name" value="MAT"/>
    <property type="match status" value="1"/>
</dbReference>
<dbReference type="SUPFAM" id="SSF55973">
    <property type="entry name" value="S-adenosylmethionine synthetase"/>
    <property type="match status" value="3"/>
</dbReference>
<dbReference type="PROSITE" id="PS00376">
    <property type="entry name" value="ADOMET_SYNTHASE_1"/>
    <property type="match status" value="1"/>
</dbReference>
<dbReference type="PROSITE" id="PS00377">
    <property type="entry name" value="ADOMET_SYNTHASE_2"/>
    <property type="match status" value="1"/>
</dbReference>
<keyword id="KW-0067">ATP-binding</keyword>
<keyword id="KW-0170">Cobalt</keyword>
<keyword id="KW-0963">Cytoplasm</keyword>
<keyword id="KW-0460">Magnesium</keyword>
<keyword id="KW-0479">Metal-binding</keyword>
<keyword id="KW-0547">Nucleotide-binding</keyword>
<keyword id="KW-0554">One-carbon metabolism</keyword>
<keyword id="KW-0630">Potassium</keyword>
<keyword id="KW-0808">Transferase</keyword>
<evidence type="ECO:0000250" key="1"/>
<evidence type="ECO:0000250" key="2">
    <source>
        <dbReference type="UniProtKB" id="P0A817"/>
    </source>
</evidence>
<evidence type="ECO:0000250" key="3">
    <source>
        <dbReference type="UniProtKB" id="P13444"/>
    </source>
</evidence>
<evidence type="ECO:0000250" key="4">
    <source>
        <dbReference type="UniProtKB" id="Q00266"/>
    </source>
</evidence>
<evidence type="ECO:0000250" key="5">
    <source>
        <dbReference type="UniProtKB" id="Q96551"/>
    </source>
</evidence>
<evidence type="ECO:0000305" key="6"/>
<accession>A7PRJ6</accession>
<reference key="1">
    <citation type="journal article" date="2007" name="Nature">
        <title>The grapevine genome sequence suggests ancestral hexaploidization in major angiosperm phyla.</title>
        <authorList>
            <person name="Jaillon O."/>
            <person name="Aury J.-M."/>
            <person name="Noel B."/>
            <person name="Policriti A."/>
            <person name="Clepet C."/>
            <person name="Casagrande A."/>
            <person name="Choisne N."/>
            <person name="Aubourg S."/>
            <person name="Vitulo N."/>
            <person name="Jubin C."/>
            <person name="Vezzi A."/>
            <person name="Legeai F."/>
            <person name="Hugueney P."/>
            <person name="Dasilva C."/>
            <person name="Horner D."/>
            <person name="Mica E."/>
            <person name="Jublot D."/>
            <person name="Poulain J."/>
            <person name="Bruyere C."/>
            <person name="Billault A."/>
            <person name="Segurens B."/>
            <person name="Gouyvenoux M."/>
            <person name="Ugarte E."/>
            <person name="Cattonaro F."/>
            <person name="Anthouard V."/>
            <person name="Vico V."/>
            <person name="Del Fabbro C."/>
            <person name="Alaux M."/>
            <person name="Di Gaspero G."/>
            <person name="Dumas V."/>
            <person name="Felice N."/>
            <person name="Paillard S."/>
            <person name="Juman I."/>
            <person name="Moroldo M."/>
            <person name="Scalabrin S."/>
            <person name="Canaguier A."/>
            <person name="Le Clainche I."/>
            <person name="Malacrida G."/>
            <person name="Durand E."/>
            <person name="Pesole G."/>
            <person name="Laucou V."/>
            <person name="Chatelet P."/>
            <person name="Merdinoglu D."/>
            <person name="Delledonne M."/>
            <person name="Pezzotti M."/>
            <person name="Lecharny A."/>
            <person name="Scarpelli C."/>
            <person name="Artiguenave F."/>
            <person name="Pe M.E."/>
            <person name="Valle G."/>
            <person name="Morgante M."/>
            <person name="Caboche M."/>
            <person name="Adam-Blondon A.-F."/>
            <person name="Weissenbach J."/>
            <person name="Quetier F."/>
            <person name="Wincker P."/>
        </authorList>
    </citation>
    <scope>NUCLEOTIDE SEQUENCE [LARGE SCALE GENOMIC DNA]</scope>
    <source>
        <strain>cv. Pinot noir / PN40024</strain>
    </source>
</reference>